<accession>Q95KW8</accession>
<evidence type="ECO:0000250" key="1"/>
<evidence type="ECO:0000255" key="2"/>
<evidence type="ECO:0000305" key="3"/>
<keyword id="KW-1003">Cell membrane</keyword>
<keyword id="KW-0333">Golgi apparatus</keyword>
<keyword id="KW-0472">Membrane</keyword>
<keyword id="KW-1185">Reference proteome</keyword>
<keyword id="KW-0677">Repeat</keyword>
<keyword id="KW-0762">Sugar transport</keyword>
<keyword id="KW-0812">Transmembrane</keyword>
<keyword id="KW-1133">Transmembrane helix</keyword>
<keyword id="KW-0813">Transport</keyword>
<protein>
    <recommendedName>
        <fullName>Sugar transporter SWEET1</fullName>
    </recommendedName>
    <alternativeName>
        <fullName>Solute carrier family 50 member 1</fullName>
    </alternativeName>
    <alternativeName>
        <fullName>Uterine stromal cell protein</fullName>
    </alternativeName>
</protein>
<comment type="function">
    <text evidence="1">Mediates sugar transport across membranes. May stimulate V(D)J recombination by the activation of RAG1 (By similarity).</text>
</comment>
<comment type="subunit">
    <text evidence="1">Interacts with TRPV2; the interaction probably occurs intracellularly and depends on TRPV2 N-glycosylation.</text>
</comment>
<comment type="subcellular location">
    <subcellularLocation>
        <location evidence="1">Golgi apparatus membrane</location>
        <topology evidence="1">Multi-pass membrane protein</topology>
    </subcellularLocation>
    <subcellularLocation>
        <location evidence="1">Cell membrane</location>
        <topology evidence="1">Multi-pass membrane protein</topology>
    </subcellularLocation>
    <text evidence="1">May also localize to the endoplasmic reticulum.</text>
</comment>
<comment type="similarity">
    <text evidence="3">Belongs to the SWEET sugar transporter family.</text>
</comment>
<feature type="chain" id="PRO_0000345118" description="Sugar transporter SWEET1">
    <location>
        <begin position="1"/>
        <end position="221"/>
    </location>
</feature>
<feature type="transmembrane region" description="Helical; Name=1" evidence="2">
    <location>
        <begin position="3"/>
        <end position="23"/>
    </location>
</feature>
<feature type="transmembrane region" description="Helical; Name=2" evidence="2">
    <location>
        <begin position="42"/>
        <end position="62"/>
    </location>
</feature>
<feature type="transmembrane region" description="Helical; Name=3" evidence="2">
    <location>
        <begin position="68"/>
        <end position="88"/>
    </location>
</feature>
<feature type="transmembrane region" description="Helical; Name=4" evidence="2">
    <location>
        <begin position="96"/>
        <end position="116"/>
    </location>
</feature>
<feature type="transmembrane region" description="Helical; Name=5" evidence="2">
    <location>
        <begin position="126"/>
        <end position="146"/>
    </location>
</feature>
<feature type="transmembrane region" description="Helical; Name=6" evidence="2">
    <location>
        <begin position="160"/>
        <end position="180"/>
    </location>
</feature>
<feature type="transmembrane region" description="Helical; Name=7" evidence="2">
    <location>
        <begin position="186"/>
        <end position="206"/>
    </location>
</feature>
<feature type="domain" description="MtN3/slv 1">
    <location>
        <begin position="10"/>
        <end position="94"/>
    </location>
</feature>
<feature type="domain" description="MtN3/slv 2">
    <location>
        <begin position="127"/>
        <end position="212"/>
    </location>
</feature>
<feature type="region of interest" description="Mediates interaction with TRPV2" evidence="1">
    <location>
        <begin position="149"/>
        <end position="221"/>
    </location>
</feature>
<sequence length="221" mass="25119">MEAGGFLDSLIYGACVVFTLGMFSAGLSDLRHMRMTRSVDNVQFLPFLTTEVNNLGWLSYGALKGDRILIVVNTVGAALQTLYILAYLHYCPRKRVVLLQTATLLGVLLLGYGYFWLLVPNPEARLQLLGLFCSVFTISMYLSPLADLAKVIQTKSTQCLSYPLTIATVLTSASWCLYGFRLRVPYIMVSNFPGIVTSFIRFWLFWKYPQEQDRNYWFLQT</sequence>
<proteinExistence type="evidence at transcript level"/>
<dbReference type="EMBL" id="AY057106">
    <property type="protein sequence ID" value="AAL11334.1"/>
    <property type="molecule type" value="mRNA"/>
</dbReference>
<dbReference type="RefSeq" id="NP_001106098.1">
    <property type="nucleotide sequence ID" value="NM_001112628.1"/>
</dbReference>
<dbReference type="SMR" id="Q95KW8"/>
<dbReference type="STRING" id="9555.ENSPANP00000002936"/>
<dbReference type="GeneID" id="100126708"/>
<dbReference type="KEGG" id="panu:100126708"/>
<dbReference type="CTD" id="55974"/>
<dbReference type="eggNOG" id="KOG1623">
    <property type="taxonomic scope" value="Eukaryota"/>
</dbReference>
<dbReference type="OrthoDB" id="8330at314294"/>
<dbReference type="Proteomes" id="UP000028761">
    <property type="component" value="Unplaced"/>
</dbReference>
<dbReference type="GO" id="GO:0012505">
    <property type="term" value="C:endomembrane system"/>
    <property type="evidence" value="ECO:0000250"/>
    <property type="project" value="UniProtKB"/>
</dbReference>
<dbReference type="GO" id="GO:0000139">
    <property type="term" value="C:Golgi membrane"/>
    <property type="evidence" value="ECO:0007669"/>
    <property type="project" value="UniProtKB-SubCell"/>
</dbReference>
<dbReference type="GO" id="GO:0005886">
    <property type="term" value="C:plasma membrane"/>
    <property type="evidence" value="ECO:0007669"/>
    <property type="project" value="UniProtKB-SubCell"/>
</dbReference>
<dbReference type="GO" id="GO:0051119">
    <property type="term" value="F:sugar transmembrane transporter activity"/>
    <property type="evidence" value="ECO:0000250"/>
    <property type="project" value="UniProtKB"/>
</dbReference>
<dbReference type="FunFam" id="1.20.1280.290:FF:000021">
    <property type="entry name" value="Solute carrier family 50 member 1"/>
    <property type="match status" value="1"/>
</dbReference>
<dbReference type="FunFam" id="1.20.1280.290:FF:000010">
    <property type="entry name" value="Sugar transporter SWEET"/>
    <property type="match status" value="1"/>
</dbReference>
<dbReference type="Gene3D" id="1.20.1280.290">
    <property type="match status" value="2"/>
</dbReference>
<dbReference type="InterPro" id="IPR047664">
    <property type="entry name" value="SWEET"/>
</dbReference>
<dbReference type="InterPro" id="IPR004316">
    <property type="entry name" value="SWEET_rpt"/>
</dbReference>
<dbReference type="PANTHER" id="PTHR10791">
    <property type="entry name" value="RAG1-ACTIVATING PROTEIN 1"/>
    <property type="match status" value="1"/>
</dbReference>
<dbReference type="PANTHER" id="PTHR10791:SF30">
    <property type="entry name" value="SUGAR TRANSPORTER SWEET1"/>
    <property type="match status" value="1"/>
</dbReference>
<dbReference type="Pfam" id="PF03083">
    <property type="entry name" value="MtN3_slv"/>
    <property type="match status" value="2"/>
</dbReference>
<organism>
    <name type="scientific">Papio anubis</name>
    <name type="common">Olive baboon</name>
    <dbReference type="NCBI Taxonomy" id="9555"/>
    <lineage>
        <taxon>Eukaryota</taxon>
        <taxon>Metazoa</taxon>
        <taxon>Chordata</taxon>
        <taxon>Craniata</taxon>
        <taxon>Vertebrata</taxon>
        <taxon>Euteleostomi</taxon>
        <taxon>Mammalia</taxon>
        <taxon>Eutheria</taxon>
        <taxon>Euarchontoglires</taxon>
        <taxon>Primates</taxon>
        <taxon>Haplorrhini</taxon>
        <taxon>Catarrhini</taxon>
        <taxon>Cercopithecidae</taxon>
        <taxon>Cercopithecinae</taxon>
        <taxon>Papio</taxon>
    </lineage>
</organism>
<reference key="1">
    <citation type="submission" date="2001-09" db="EMBL/GenBank/DDBJ databases">
        <title>Stromal cell protein expression in the baboon uterus.</title>
        <authorList>
            <person name="Lobo S."/>
            <person name="Brudney A."/>
            <person name="Barkai U."/>
            <person name="Johnson C."/>
            <person name="Lessey B."/>
            <person name="Fazleabas A."/>
        </authorList>
    </citation>
    <scope>NUCLEOTIDE SEQUENCE [MRNA]</scope>
</reference>
<name>SWET1_PAPAN</name>
<gene>
    <name type="primary">SLC50A1</name>
</gene>